<reference key="1">
    <citation type="journal article" date="2009" name="J. Bacteriol.">
        <title>Complete genome sequence and comparative genome analysis of enteropathogenic Escherichia coli O127:H6 strain E2348/69.</title>
        <authorList>
            <person name="Iguchi A."/>
            <person name="Thomson N.R."/>
            <person name="Ogura Y."/>
            <person name="Saunders D."/>
            <person name="Ooka T."/>
            <person name="Henderson I.R."/>
            <person name="Harris D."/>
            <person name="Asadulghani M."/>
            <person name="Kurokawa K."/>
            <person name="Dean P."/>
            <person name="Kenny B."/>
            <person name="Quail M.A."/>
            <person name="Thurston S."/>
            <person name="Dougan G."/>
            <person name="Hayashi T."/>
            <person name="Parkhill J."/>
            <person name="Frankel G."/>
        </authorList>
    </citation>
    <scope>NUCLEOTIDE SEQUENCE [LARGE SCALE GENOMIC DNA]</scope>
    <source>
        <strain>E2348/69 / EPEC</strain>
    </source>
</reference>
<accession>B7UK38</accession>
<name>RS3_ECO27</name>
<gene>
    <name evidence="1" type="primary">rpsC</name>
    <name type="ordered locus">E2348C_3577</name>
</gene>
<organism>
    <name type="scientific">Escherichia coli O127:H6 (strain E2348/69 / EPEC)</name>
    <dbReference type="NCBI Taxonomy" id="574521"/>
    <lineage>
        <taxon>Bacteria</taxon>
        <taxon>Pseudomonadati</taxon>
        <taxon>Pseudomonadota</taxon>
        <taxon>Gammaproteobacteria</taxon>
        <taxon>Enterobacterales</taxon>
        <taxon>Enterobacteriaceae</taxon>
        <taxon>Escherichia</taxon>
    </lineage>
</organism>
<evidence type="ECO:0000255" key="1">
    <source>
        <dbReference type="HAMAP-Rule" id="MF_01309"/>
    </source>
</evidence>
<evidence type="ECO:0000305" key="2"/>
<proteinExistence type="inferred from homology"/>
<keyword id="KW-1185">Reference proteome</keyword>
<keyword id="KW-0687">Ribonucleoprotein</keyword>
<keyword id="KW-0689">Ribosomal protein</keyword>
<keyword id="KW-0694">RNA-binding</keyword>
<keyword id="KW-0699">rRNA-binding</keyword>
<comment type="function">
    <text evidence="1">Binds the lower part of the 30S subunit head. Binds mRNA in the 70S ribosome, positioning it for translation.</text>
</comment>
<comment type="subunit">
    <text evidence="1">Part of the 30S ribosomal subunit. Forms a tight complex with proteins S10 and S14.</text>
</comment>
<comment type="similarity">
    <text evidence="1">Belongs to the universal ribosomal protein uS3 family.</text>
</comment>
<protein>
    <recommendedName>
        <fullName evidence="1">Small ribosomal subunit protein uS3</fullName>
    </recommendedName>
    <alternativeName>
        <fullName evidence="2">30S ribosomal protein S3</fullName>
    </alternativeName>
</protein>
<sequence length="233" mass="25983">MGQKVHPNGIRLGIVKPWNSTWFANTKEFADNLDSDFKVRQYLTKELAKASVSRIVIERPAKSIRVTIHTARPGIVIGKKGEDVEKLRKVVADIAGVPAQINIAEVRKPELDAKLVADSITSQLERRVMFRRAMKRAVQNAMRLGAKGIKVEVSGRLGGAEIARTEWYREGRVPLHTLRADIDYNTSEAHTTYGVIGVKVWIFKGEILGGMAAVEQPEKPAAQPKKQQRKGRK</sequence>
<dbReference type="EMBL" id="FM180568">
    <property type="protein sequence ID" value="CAS11125.1"/>
    <property type="molecule type" value="Genomic_DNA"/>
</dbReference>
<dbReference type="RefSeq" id="WP_000529945.1">
    <property type="nucleotide sequence ID" value="NC_011601.1"/>
</dbReference>
<dbReference type="SMR" id="B7UK38"/>
<dbReference type="GeneID" id="97603663"/>
<dbReference type="KEGG" id="ecg:E2348C_3577"/>
<dbReference type="HOGENOM" id="CLU_058591_0_2_6"/>
<dbReference type="Proteomes" id="UP000008205">
    <property type="component" value="Chromosome"/>
</dbReference>
<dbReference type="GO" id="GO:0022627">
    <property type="term" value="C:cytosolic small ribosomal subunit"/>
    <property type="evidence" value="ECO:0007669"/>
    <property type="project" value="TreeGrafter"/>
</dbReference>
<dbReference type="GO" id="GO:0003729">
    <property type="term" value="F:mRNA binding"/>
    <property type="evidence" value="ECO:0007669"/>
    <property type="project" value="UniProtKB-UniRule"/>
</dbReference>
<dbReference type="GO" id="GO:0019843">
    <property type="term" value="F:rRNA binding"/>
    <property type="evidence" value="ECO:0007669"/>
    <property type="project" value="UniProtKB-UniRule"/>
</dbReference>
<dbReference type="GO" id="GO:0003735">
    <property type="term" value="F:structural constituent of ribosome"/>
    <property type="evidence" value="ECO:0007669"/>
    <property type="project" value="InterPro"/>
</dbReference>
<dbReference type="GO" id="GO:0006412">
    <property type="term" value="P:translation"/>
    <property type="evidence" value="ECO:0007669"/>
    <property type="project" value="UniProtKB-UniRule"/>
</dbReference>
<dbReference type="CDD" id="cd02412">
    <property type="entry name" value="KH-II_30S_S3"/>
    <property type="match status" value="1"/>
</dbReference>
<dbReference type="FunFam" id="3.30.1140.32:FF:000001">
    <property type="entry name" value="30S ribosomal protein S3"/>
    <property type="match status" value="1"/>
</dbReference>
<dbReference type="FunFam" id="3.30.300.20:FF:000001">
    <property type="entry name" value="30S ribosomal protein S3"/>
    <property type="match status" value="1"/>
</dbReference>
<dbReference type="Gene3D" id="3.30.300.20">
    <property type="match status" value="1"/>
</dbReference>
<dbReference type="Gene3D" id="3.30.1140.32">
    <property type="entry name" value="Ribosomal protein S3, C-terminal domain"/>
    <property type="match status" value="1"/>
</dbReference>
<dbReference type="HAMAP" id="MF_01309_B">
    <property type="entry name" value="Ribosomal_uS3_B"/>
    <property type="match status" value="1"/>
</dbReference>
<dbReference type="InterPro" id="IPR004087">
    <property type="entry name" value="KH_dom"/>
</dbReference>
<dbReference type="InterPro" id="IPR015946">
    <property type="entry name" value="KH_dom-like_a/b"/>
</dbReference>
<dbReference type="InterPro" id="IPR004044">
    <property type="entry name" value="KH_dom_type_2"/>
</dbReference>
<dbReference type="InterPro" id="IPR009019">
    <property type="entry name" value="KH_sf_prok-type"/>
</dbReference>
<dbReference type="InterPro" id="IPR036419">
    <property type="entry name" value="Ribosomal_S3_C_sf"/>
</dbReference>
<dbReference type="InterPro" id="IPR005704">
    <property type="entry name" value="Ribosomal_uS3_bac-typ"/>
</dbReference>
<dbReference type="InterPro" id="IPR001351">
    <property type="entry name" value="Ribosomal_uS3_C"/>
</dbReference>
<dbReference type="InterPro" id="IPR018280">
    <property type="entry name" value="Ribosomal_uS3_CS"/>
</dbReference>
<dbReference type="NCBIfam" id="TIGR01009">
    <property type="entry name" value="rpsC_bact"/>
    <property type="match status" value="1"/>
</dbReference>
<dbReference type="PANTHER" id="PTHR11760">
    <property type="entry name" value="30S/40S RIBOSOMAL PROTEIN S3"/>
    <property type="match status" value="1"/>
</dbReference>
<dbReference type="PANTHER" id="PTHR11760:SF19">
    <property type="entry name" value="SMALL RIBOSOMAL SUBUNIT PROTEIN US3C"/>
    <property type="match status" value="1"/>
</dbReference>
<dbReference type="Pfam" id="PF07650">
    <property type="entry name" value="KH_2"/>
    <property type="match status" value="1"/>
</dbReference>
<dbReference type="Pfam" id="PF00189">
    <property type="entry name" value="Ribosomal_S3_C"/>
    <property type="match status" value="1"/>
</dbReference>
<dbReference type="SMART" id="SM00322">
    <property type="entry name" value="KH"/>
    <property type="match status" value="1"/>
</dbReference>
<dbReference type="SUPFAM" id="SSF54814">
    <property type="entry name" value="Prokaryotic type KH domain (KH-domain type II)"/>
    <property type="match status" value="1"/>
</dbReference>
<dbReference type="SUPFAM" id="SSF54821">
    <property type="entry name" value="Ribosomal protein S3 C-terminal domain"/>
    <property type="match status" value="1"/>
</dbReference>
<dbReference type="PROSITE" id="PS50823">
    <property type="entry name" value="KH_TYPE_2"/>
    <property type="match status" value="1"/>
</dbReference>
<dbReference type="PROSITE" id="PS00548">
    <property type="entry name" value="RIBOSOMAL_S3"/>
    <property type="match status" value="1"/>
</dbReference>
<feature type="chain" id="PRO_1000165494" description="Small ribosomal subunit protein uS3">
    <location>
        <begin position="1"/>
        <end position="233"/>
    </location>
</feature>
<feature type="domain" description="KH type-2" evidence="1">
    <location>
        <begin position="39"/>
        <end position="107"/>
    </location>
</feature>